<accession>Q62HI0</accession>
<feature type="chain" id="PRO_0000158746" description="Adenylate kinase">
    <location>
        <begin position="1"/>
        <end position="220"/>
    </location>
</feature>
<feature type="region of interest" description="NMP" evidence="1">
    <location>
        <begin position="30"/>
        <end position="59"/>
    </location>
</feature>
<feature type="region of interest" description="LID" evidence="1">
    <location>
        <begin position="122"/>
        <end position="159"/>
    </location>
</feature>
<feature type="binding site" evidence="1">
    <location>
        <begin position="10"/>
        <end position="15"/>
    </location>
    <ligand>
        <name>ATP</name>
        <dbReference type="ChEBI" id="CHEBI:30616"/>
    </ligand>
</feature>
<feature type="binding site" evidence="1">
    <location>
        <position position="31"/>
    </location>
    <ligand>
        <name>AMP</name>
        <dbReference type="ChEBI" id="CHEBI:456215"/>
    </ligand>
</feature>
<feature type="binding site" evidence="1">
    <location>
        <position position="36"/>
    </location>
    <ligand>
        <name>AMP</name>
        <dbReference type="ChEBI" id="CHEBI:456215"/>
    </ligand>
</feature>
<feature type="binding site" evidence="1">
    <location>
        <begin position="57"/>
        <end position="59"/>
    </location>
    <ligand>
        <name>AMP</name>
        <dbReference type="ChEBI" id="CHEBI:456215"/>
    </ligand>
</feature>
<feature type="binding site" evidence="1">
    <location>
        <begin position="85"/>
        <end position="88"/>
    </location>
    <ligand>
        <name>AMP</name>
        <dbReference type="ChEBI" id="CHEBI:456215"/>
    </ligand>
</feature>
<feature type="binding site" evidence="1">
    <location>
        <position position="92"/>
    </location>
    <ligand>
        <name>AMP</name>
        <dbReference type="ChEBI" id="CHEBI:456215"/>
    </ligand>
</feature>
<feature type="binding site" evidence="1">
    <location>
        <position position="123"/>
    </location>
    <ligand>
        <name>ATP</name>
        <dbReference type="ChEBI" id="CHEBI:30616"/>
    </ligand>
</feature>
<feature type="binding site" evidence="1">
    <location>
        <begin position="132"/>
        <end position="133"/>
    </location>
    <ligand>
        <name>ATP</name>
        <dbReference type="ChEBI" id="CHEBI:30616"/>
    </ligand>
</feature>
<feature type="binding site" evidence="1">
    <location>
        <position position="156"/>
    </location>
    <ligand>
        <name>AMP</name>
        <dbReference type="ChEBI" id="CHEBI:456215"/>
    </ligand>
</feature>
<feature type="binding site" evidence="1">
    <location>
        <position position="167"/>
    </location>
    <ligand>
        <name>AMP</name>
        <dbReference type="ChEBI" id="CHEBI:456215"/>
    </ligand>
</feature>
<feature type="binding site" evidence="1">
    <location>
        <position position="206"/>
    </location>
    <ligand>
        <name>ATP</name>
        <dbReference type="ChEBI" id="CHEBI:30616"/>
    </ligand>
</feature>
<comment type="function">
    <text evidence="1">Catalyzes the reversible transfer of the terminal phosphate group between ATP and AMP. Plays an important role in cellular energy homeostasis and in adenine nucleotide metabolism.</text>
</comment>
<comment type="catalytic activity">
    <reaction evidence="1">
        <text>AMP + ATP = 2 ADP</text>
        <dbReference type="Rhea" id="RHEA:12973"/>
        <dbReference type="ChEBI" id="CHEBI:30616"/>
        <dbReference type="ChEBI" id="CHEBI:456215"/>
        <dbReference type="ChEBI" id="CHEBI:456216"/>
        <dbReference type="EC" id="2.7.4.3"/>
    </reaction>
</comment>
<comment type="pathway">
    <text evidence="1">Purine metabolism; AMP biosynthesis via salvage pathway; AMP from ADP: step 1/1.</text>
</comment>
<comment type="subunit">
    <text evidence="1">Monomer.</text>
</comment>
<comment type="subcellular location">
    <subcellularLocation>
        <location evidence="1">Cytoplasm</location>
    </subcellularLocation>
</comment>
<comment type="domain">
    <text evidence="1">Consists of three domains, a large central CORE domain and two small peripheral domains, NMPbind and LID, which undergo movements during catalysis. The LID domain closes over the site of phosphoryl transfer upon ATP binding. Assembling and dissambling the active center during each catalytic cycle provides an effective means to prevent ATP hydrolysis.</text>
</comment>
<comment type="similarity">
    <text evidence="1">Belongs to the adenylate kinase family.</text>
</comment>
<proteinExistence type="inferred from homology"/>
<evidence type="ECO:0000255" key="1">
    <source>
        <dbReference type="HAMAP-Rule" id="MF_00235"/>
    </source>
</evidence>
<gene>
    <name evidence="1" type="primary">adk</name>
    <name type="ordered locus">BMA2277</name>
</gene>
<name>KAD_BURMA</name>
<dbReference type="EC" id="2.7.4.3" evidence="1"/>
<dbReference type="EMBL" id="CP000010">
    <property type="protein sequence ID" value="AAU49873.1"/>
    <property type="molecule type" value="Genomic_DNA"/>
</dbReference>
<dbReference type="RefSeq" id="WP_004185840.1">
    <property type="nucleotide sequence ID" value="NC_006348.1"/>
</dbReference>
<dbReference type="RefSeq" id="YP_103840.1">
    <property type="nucleotide sequence ID" value="NC_006348.1"/>
</dbReference>
<dbReference type="SMR" id="Q62HI0"/>
<dbReference type="GeneID" id="93059382"/>
<dbReference type="KEGG" id="bma:BMA2277"/>
<dbReference type="PATRIC" id="fig|243160.12.peg.2344"/>
<dbReference type="eggNOG" id="COG0563">
    <property type="taxonomic scope" value="Bacteria"/>
</dbReference>
<dbReference type="HOGENOM" id="CLU_032354_1_2_4"/>
<dbReference type="UniPathway" id="UPA00588">
    <property type="reaction ID" value="UER00649"/>
</dbReference>
<dbReference type="Proteomes" id="UP000006693">
    <property type="component" value="Chromosome 1"/>
</dbReference>
<dbReference type="GO" id="GO:0005737">
    <property type="term" value="C:cytoplasm"/>
    <property type="evidence" value="ECO:0007669"/>
    <property type="project" value="UniProtKB-SubCell"/>
</dbReference>
<dbReference type="GO" id="GO:0004017">
    <property type="term" value="F:adenylate kinase activity"/>
    <property type="evidence" value="ECO:0007669"/>
    <property type="project" value="UniProtKB-UniRule"/>
</dbReference>
<dbReference type="GO" id="GO:0005524">
    <property type="term" value="F:ATP binding"/>
    <property type="evidence" value="ECO:0007669"/>
    <property type="project" value="UniProtKB-UniRule"/>
</dbReference>
<dbReference type="GO" id="GO:0044209">
    <property type="term" value="P:AMP salvage"/>
    <property type="evidence" value="ECO:0007669"/>
    <property type="project" value="UniProtKB-UniRule"/>
</dbReference>
<dbReference type="CDD" id="cd01428">
    <property type="entry name" value="ADK"/>
    <property type="match status" value="1"/>
</dbReference>
<dbReference type="FunFam" id="3.40.50.300:FF:000106">
    <property type="entry name" value="Adenylate kinase mitochondrial"/>
    <property type="match status" value="1"/>
</dbReference>
<dbReference type="Gene3D" id="3.40.50.300">
    <property type="entry name" value="P-loop containing nucleotide triphosphate hydrolases"/>
    <property type="match status" value="1"/>
</dbReference>
<dbReference type="HAMAP" id="MF_00235">
    <property type="entry name" value="Adenylate_kinase_Adk"/>
    <property type="match status" value="1"/>
</dbReference>
<dbReference type="InterPro" id="IPR006259">
    <property type="entry name" value="Adenyl_kin_sub"/>
</dbReference>
<dbReference type="InterPro" id="IPR000850">
    <property type="entry name" value="Adenylat/UMP-CMP_kin"/>
</dbReference>
<dbReference type="InterPro" id="IPR033690">
    <property type="entry name" value="Adenylat_kinase_CS"/>
</dbReference>
<dbReference type="InterPro" id="IPR007862">
    <property type="entry name" value="Adenylate_kinase_lid-dom"/>
</dbReference>
<dbReference type="InterPro" id="IPR027417">
    <property type="entry name" value="P-loop_NTPase"/>
</dbReference>
<dbReference type="NCBIfam" id="TIGR01351">
    <property type="entry name" value="adk"/>
    <property type="match status" value="1"/>
</dbReference>
<dbReference type="NCBIfam" id="NF001379">
    <property type="entry name" value="PRK00279.1-1"/>
    <property type="match status" value="1"/>
</dbReference>
<dbReference type="NCBIfam" id="NF001380">
    <property type="entry name" value="PRK00279.1-2"/>
    <property type="match status" value="1"/>
</dbReference>
<dbReference type="NCBIfam" id="NF001381">
    <property type="entry name" value="PRK00279.1-3"/>
    <property type="match status" value="1"/>
</dbReference>
<dbReference type="NCBIfam" id="NF011100">
    <property type="entry name" value="PRK14527.1"/>
    <property type="match status" value="1"/>
</dbReference>
<dbReference type="PANTHER" id="PTHR23359">
    <property type="entry name" value="NUCLEOTIDE KINASE"/>
    <property type="match status" value="1"/>
</dbReference>
<dbReference type="Pfam" id="PF00406">
    <property type="entry name" value="ADK"/>
    <property type="match status" value="1"/>
</dbReference>
<dbReference type="Pfam" id="PF05191">
    <property type="entry name" value="ADK_lid"/>
    <property type="match status" value="1"/>
</dbReference>
<dbReference type="PRINTS" id="PR00094">
    <property type="entry name" value="ADENYLTKNASE"/>
</dbReference>
<dbReference type="SUPFAM" id="SSF52540">
    <property type="entry name" value="P-loop containing nucleoside triphosphate hydrolases"/>
    <property type="match status" value="1"/>
</dbReference>
<dbReference type="PROSITE" id="PS00113">
    <property type="entry name" value="ADENYLATE_KINASE"/>
    <property type="match status" value="1"/>
</dbReference>
<sequence length="220" mass="24170">MRLILLGAPGAGKGTQANFIKEKFGIPQISTGDMLRAAVKAGTPLGVEAKTYMDEGKLVPDSLIIGLVKERLKEADCANGYLFDGFPRTIAQADAMKEAGVAIDYVLEIDVPFSEIIERMSGRRTHPASGRTYHVKFNPPKVEGKDDVTGEPLVQRDDDKEETVKKRLDVYEAQTKPLITYYGDWARRGAENGLKAPAYRKISGLGAVEEIRARVFDALK</sequence>
<protein>
    <recommendedName>
        <fullName evidence="1">Adenylate kinase</fullName>
        <shortName evidence="1">AK</shortName>
        <ecNumber evidence="1">2.7.4.3</ecNumber>
    </recommendedName>
    <alternativeName>
        <fullName evidence="1">ATP-AMP transphosphorylase</fullName>
    </alternativeName>
    <alternativeName>
        <fullName evidence="1">ATP:AMP phosphotransferase</fullName>
    </alternativeName>
    <alternativeName>
        <fullName evidence="1">Adenylate monophosphate kinase</fullName>
    </alternativeName>
</protein>
<reference key="1">
    <citation type="journal article" date="2004" name="Proc. Natl. Acad. Sci. U.S.A.">
        <title>Structural flexibility in the Burkholderia mallei genome.</title>
        <authorList>
            <person name="Nierman W.C."/>
            <person name="DeShazer D."/>
            <person name="Kim H.S."/>
            <person name="Tettelin H."/>
            <person name="Nelson K.E."/>
            <person name="Feldblyum T.V."/>
            <person name="Ulrich R.L."/>
            <person name="Ronning C.M."/>
            <person name="Brinkac L.M."/>
            <person name="Daugherty S.C."/>
            <person name="Davidsen T.D."/>
            <person name="DeBoy R.T."/>
            <person name="Dimitrov G."/>
            <person name="Dodson R.J."/>
            <person name="Durkin A.S."/>
            <person name="Gwinn M.L."/>
            <person name="Haft D.H."/>
            <person name="Khouri H.M."/>
            <person name="Kolonay J.F."/>
            <person name="Madupu R."/>
            <person name="Mohammoud Y."/>
            <person name="Nelson W.C."/>
            <person name="Radune D."/>
            <person name="Romero C.M."/>
            <person name="Sarria S."/>
            <person name="Selengut J."/>
            <person name="Shamblin C."/>
            <person name="Sullivan S.A."/>
            <person name="White O."/>
            <person name="Yu Y."/>
            <person name="Zafar N."/>
            <person name="Zhou L."/>
            <person name="Fraser C.M."/>
        </authorList>
    </citation>
    <scope>NUCLEOTIDE SEQUENCE [LARGE SCALE GENOMIC DNA]</scope>
    <source>
        <strain>ATCC 23344</strain>
    </source>
</reference>
<organism>
    <name type="scientific">Burkholderia mallei (strain ATCC 23344)</name>
    <dbReference type="NCBI Taxonomy" id="243160"/>
    <lineage>
        <taxon>Bacteria</taxon>
        <taxon>Pseudomonadati</taxon>
        <taxon>Pseudomonadota</taxon>
        <taxon>Betaproteobacteria</taxon>
        <taxon>Burkholderiales</taxon>
        <taxon>Burkholderiaceae</taxon>
        <taxon>Burkholderia</taxon>
        <taxon>pseudomallei group</taxon>
    </lineage>
</organism>
<keyword id="KW-0067">ATP-binding</keyword>
<keyword id="KW-0963">Cytoplasm</keyword>
<keyword id="KW-0418">Kinase</keyword>
<keyword id="KW-0545">Nucleotide biosynthesis</keyword>
<keyword id="KW-0547">Nucleotide-binding</keyword>
<keyword id="KW-1185">Reference proteome</keyword>
<keyword id="KW-0808">Transferase</keyword>